<sequence length="657" mass="72241">MAPNLQPQPQSQLQRPRLKDHRPWSGLSNISKRSFRSCATSAFEADDERSSSDGDMSPRNSEADLRRPVVPRHFGHDARPTSRRELLGWYAYAFAAETYVICGIASFIPILLETLARENGVLVSDRKTPCGSSDSKNDGDGQCIVWVFGMEINTASFAMYTFSVSVLVQALLVVSISCAADHGNYRKKLLLTFAWIGSFAVMSYIFITKDNYILGALLTVISNTSFGASFVLLNSFLPLLVRYHPDVIEANVATTPDLGSSEFESRPLDQSVGQLESSPVTATSPLLHPEDGGRLKPTASHAEITSKELELSTRISAIGIGTGYIAALFLQCICIGVLISLHNTTWGQRVVLFMVGVWWTVFTIPAAMWLRPRPGPPLADNGRKGIMAGLAYILYAWKSLFKTIQQARRLLDIVLFLAGWFLLSDAIATTSSTAILFAKTQLHMKPWALGMINVISTTAGVFGAFGWSWVSRLFNLKAHQTILVCIALFELIPLYGLLGYLPFVKNWGVFGLQQPWEMYPLAAVYGVVLGGLSGYCRSLYGELIPPGSEAAFYALYAITDKGSSVFGPTIVGAIIDRTGTIRPAFWFLAVLVGFPAPLIWFIDVERGRREGAKLAKSITDSIVQEEDESDDGAERRGMLSDYEREHGQSIDDERAGR</sequence>
<comment type="function">
    <text evidence="1 5">Vacuolar effluxer which mediate the efflux of leucine and other amino acids resulting from autophagic degradation (By similarity). The release of autophagic amino acids allows the maintenance of protein synthesis and viability during nitrogen starvation (By similarity). Autophagy is required for proper vegetative growth, asexual/sexual reproduction, and full virulence (PubMed:28894236). Autophagy is particularly involved in the biosynthesis of deoxynivalenol (DON), an important virulence determinant (PubMed:28894236).</text>
</comment>
<comment type="subcellular location">
    <subcellularLocation>
        <location evidence="1">Vacuole membrane</location>
        <topology evidence="1">Multi-pass membrane protein</topology>
    </subcellularLocation>
    <text evidence="1">Vacuole and punctate structures (By similarity).</text>
</comment>
<comment type="disruption phenotype">
    <text evidence="5">Significantly decreases the radial growth of colonies under nutrient-rich conditions (PubMed:28894236).</text>
</comment>
<comment type="similarity">
    <text evidence="7">Belongs to the ATG22 family.</text>
</comment>
<accession>V6QX21</accession>
<protein>
    <recommendedName>
        <fullName evidence="6">Autophagy-related protein 22</fullName>
    </recommendedName>
</protein>
<feature type="chain" id="PRO_0000443921" description="Autophagy-related protein 22">
    <location>
        <begin position="1"/>
        <end position="657"/>
    </location>
</feature>
<feature type="topological domain" description="Cytoplasmic" evidence="7">
    <location>
        <begin position="1"/>
        <end position="91"/>
    </location>
</feature>
<feature type="transmembrane region" description="Helical" evidence="2">
    <location>
        <begin position="92"/>
        <end position="112"/>
    </location>
</feature>
<feature type="topological domain" description="Vacuolar" evidence="7">
    <location>
        <begin position="113"/>
        <end position="155"/>
    </location>
</feature>
<feature type="transmembrane region" description="Helical" evidence="2">
    <location>
        <begin position="156"/>
        <end position="176"/>
    </location>
</feature>
<feature type="topological domain" description="Cytoplasmic" evidence="7">
    <location>
        <begin position="177"/>
        <end position="187"/>
    </location>
</feature>
<feature type="transmembrane region" description="Helical" evidence="2">
    <location>
        <begin position="188"/>
        <end position="208"/>
    </location>
</feature>
<feature type="topological domain" description="Vacuolar" evidence="7">
    <location>
        <begin position="209"/>
        <end position="212"/>
    </location>
</feature>
<feature type="transmembrane region" description="Helical" evidence="2">
    <location>
        <begin position="213"/>
        <end position="233"/>
    </location>
</feature>
<feature type="topological domain" description="Cytoplasmic" evidence="7">
    <location>
        <begin position="234"/>
        <end position="317"/>
    </location>
</feature>
<feature type="transmembrane region" description="Helical" evidence="2">
    <location>
        <begin position="318"/>
        <end position="338"/>
    </location>
</feature>
<feature type="topological domain" description="Vacuolar" evidence="7">
    <location>
        <begin position="339"/>
        <end position="349"/>
    </location>
</feature>
<feature type="transmembrane region" description="Helical" evidence="2">
    <location>
        <begin position="350"/>
        <end position="370"/>
    </location>
</feature>
<feature type="topological domain" description="Cytoplasmic" evidence="7">
    <location>
        <begin position="371"/>
        <end position="384"/>
    </location>
</feature>
<feature type="transmembrane region" description="Helical" evidence="2">
    <location>
        <begin position="385"/>
        <end position="405"/>
    </location>
</feature>
<feature type="topological domain" description="Vacuolar" evidence="7">
    <location>
        <begin position="406"/>
        <end position="409"/>
    </location>
</feature>
<feature type="transmembrane region" description="Helical" evidence="2">
    <location>
        <begin position="410"/>
        <end position="430"/>
    </location>
</feature>
<feature type="topological domain" description="Cytoplasmic" evidence="7">
    <location>
        <begin position="431"/>
        <end position="446"/>
    </location>
</feature>
<feature type="transmembrane region" description="Helical" evidence="2">
    <location>
        <begin position="447"/>
        <end position="467"/>
    </location>
</feature>
<feature type="topological domain" description="Vacuolar" evidence="7">
    <location>
        <begin position="468"/>
        <end position="481"/>
    </location>
</feature>
<feature type="transmembrane region" description="Helical" evidence="2">
    <location>
        <begin position="482"/>
        <end position="502"/>
    </location>
</feature>
<feature type="topological domain" description="Cytoplasmic" evidence="7">
    <location>
        <begin position="503"/>
        <end position="515"/>
    </location>
</feature>
<feature type="transmembrane region" description="Helical" evidence="2">
    <location>
        <begin position="516"/>
        <end position="536"/>
    </location>
</feature>
<feature type="topological domain" description="Vacuolar" evidence="7">
    <location>
        <begin position="537"/>
        <end position="554"/>
    </location>
</feature>
<feature type="transmembrane region" description="Helical" evidence="2">
    <location>
        <begin position="555"/>
        <end position="575"/>
    </location>
</feature>
<feature type="topological domain" description="Cytoplasmic" evidence="7">
    <location>
        <begin position="576"/>
        <end position="583"/>
    </location>
</feature>
<feature type="transmembrane region" description="Helical" evidence="2">
    <location>
        <begin position="584"/>
        <end position="604"/>
    </location>
</feature>
<feature type="topological domain" description="Vacuolar" evidence="7">
    <location>
        <begin position="605"/>
        <end position="657"/>
    </location>
</feature>
<feature type="region of interest" description="Disordered" evidence="4">
    <location>
        <begin position="1"/>
        <end position="78"/>
    </location>
</feature>
<feature type="region of interest" description="Disordered" evidence="4">
    <location>
        <begin position="615"/>
        <end position="657"/>
    </location>
</feature>
<feature type="compositionally biased region" description="Low complexity" evidence="4">
    <location>
        <begin position="1"/>
        <end position="15"/>
    </location>
</feature>
<feature type="compositionally biased region" description="Polar residues" evidence="4">
    <location>
        <begin position="26"/>
        <end position="40"/>
    </location>
</feature>
<feature type="compositionally biased region" description="Basic and acidic residues" evidence="4">
    <location>
        <begin position="632"/>
        <end position="657"/>
    </location>
</feature>
<feature type="glycosylation site" description="N-linked (GlcNAc...) asparagine" evidence="3">
    <location>
        <position position="343"/>
    </location>
</feature>
<dbReference type="EMBL" id="HG970332">
    <property type="protein sequence ID" value="CEF73316.1"/>
    <property type="molecule type" value="Genomic_DNA"/>
</dbReference>
<dbReference type="RefSeq" id="XP_011316999.1">
    <property type="nucleotide sequence ID" value="XM_011318697.1"/>
</dbReference>
<dbReference type="FunCoup" id="V6QX21">
    <property type="interactions" value="26"/>
</dbReference>
<dbReference type="STRING" id="229533.V6QX21"/>
<dbReference type="GlyCosmos" id="V6QX21">
    <property type="glycosylation" value="1 site, No reported glycans"/>
</dbReference>
<dbReference type="KEGG" id="fgr:FGSG_01225"/>
<dbReference type="VEuPathDB" id="FungiDB:FGRAMPH1_01G03029"/>
<dbReference type="eggNOG" id="ENOG502QR9I">
    <property type="taxonomic scope" value="Eukaryota"/>
</dbReference>
<dbReference type="HOGENOM" id="CLU_017518_1_1_1"/>
<dbReference type="InParanoid" id="V6QX21"/>
<dbReference type="OrthoDB" id="64929at110618"/>
<dbReference type="Proteomes" id="UP000070720">
    <property type="component" value="Chromosome 1"/>
</dbReference>
<dbReference type="GO" id="GO:0005774">
    <property type="term" value="C:vacuolar membrane"/>
    <property type="evidence" value="ECO:0007669"/>
    <property type="project" value="UniProtKB-SubCell"/>
</dbReference>
<dbReference type="GO" id="GO:0032974">
    <property type="term" value="P:amino acid transmembrane export from vacuole"/>
    <property type="evidence" value="ECO:0007669"/>
    <property type="project" value="InterPro"/>
</dbReference>
<dbReference type="GO" id="GO:0006914">
    <property type="term" value="P:autophagy"/>
    <property type="evidence" value="ECO:0007669"/>
    <property type="project" value="UniProtKB-KW"/>
</dbReference>
<dbReference type="CDD" id="cd17483">
    <property type="entry name" value="MFS_Atg22_like"/>
    <property type="match status" value="1"/>
</dbReference>
<dbReference type="Gene3D" id="1.20.1250.20">
    <property type="entry name" value="MFS general substrate transporter like domains"/>
    <property type="match status" value="1"/>
</dbReference>
<dbReference type="InterPro" id="IPR044738">
    <property type="entry name" value="Atg22"/>
</dbReference>
<dbReference type="InterPro" id="IPR024671">
    <property type="entry name" value="Atg22-like"/>
</dbReference>
<dbReference type="InterPro" id="IPR050495">
    <property type="entry name" value="ATG22/LtaA_families"/>
</dbReference>
<dbReference type="InterPro" id="IPR036259">
    <property type="entry name" value="MFS_trans_sf"/>
</dbReference>
<dbReference type="PANTHER" id="PTHR23519">
    <property type="entry name" value="AUTOPHAGY-RELATED PROTEIN 22"/>
    <property type="match status" value="1"/>
</dbReference>
<dbReference type="PANTHER" id="PTHR23519:SF1">
    <property type="entry name" value="AUTOPHAGY-RELATED PROTEIN 22"/>
    <property type="match status" value="1"/>
</dbReference>
<dbReference type="Pfam" id="PF11700">
    <property type="entry name" value="ATG22"/>
    <property type="match status" value="1"/>
</dbReference>
<dbReference type="SUPFAM" id="SSF103473">
    <property type="entry name" value="MFS general substrate transporter"/>
    <property type="match status" value="1"/>
</dbReference>
<evidence type="ECO:0000250" key="1">
    <source>
        <dbReference type="UniProtKB" id="P25568"/>
    </source>
</evidence>
<evidence type="ECO:0000255" key="2"/>
<evidence type="ECO:0000255" key="3">
    <source>
        <dbReference type="PROSITE-ProRule" id="PRU00498"/>
    </source>
</evidence>
<evidence type="ECO:0000256" key="4">
    <source>
        <dbReference type="SAM" id="MobiDB-lite"/>
    </source>
</evidence>
<evidence type="ECO:0000269" key="5">
    <source>
    </source>
</evidence>
<evidence type="ECO:0000303" key="6">
    <source>
    </source>
</evidence>
<evidence type="ECO:0000305" key="7"/>
<reference key="1">
    <citation type="journal article" date="2007" name="Science">
        <title>The Fusarium graminearum genome reveals a link between localized polymorphism and pathogen specialization.</title>
        <authorList>
            <person name="Cuomo C.A."/>
            <person name="Gueldener U."/>
            <person name="Xu J.-R."/>
            <person name="Trail F."/>
            <person name="Turgeon B.G."/>
            <person name="Di Pietro A."/>
            <person name="Walton J.D."/>
            <person name="Ma L.-J."/>
            <person name="Baker S.E."/>
            <person name="Rep M."/>
            <person name="Adam G."/>
            <person name="Antoniw J."/>
            <person name="Baldwin T."/>
            <person name="Calvo S.E."/>
            <person name="Chang Y.-L."/>
            <person name="DeCaprio D."/>
            <person name="Gale L.R."/>
            <person name="Gnerre S."/>
            <person name="Goswami R.S."/>
            <person name="Hammond-Kosack K."/>
            <person name="Harris L.J."/>
            <person name="Hilburn K."/>
            <person name="Kennell J.C."/>
            <person name="Kroken S."/>
            <person name="Magnuson J.K."/>
            <person name="Mannhaupt G."/>
            <person name="Mauceli E.W."/>
            <person name="Mewes H.-W."/>
            <person name="Mitterbauer R."/>
            <person name="Muehlbauer G."/>
            <person name="Muensterkoetter M."/>
            <person name="Nelson D."/>
            <person name="O'Donnell K."/>
            <person name="Ouellet T."/>
            <person name="Qi W."/>
            <person name="Quesneville H."/>
            <person name="Roncero M.I.G."/>
            <person name="Seong K.-Y."/>
            <person name="Tetko I.V."/>
            <person name="Urban M."/>
            <person name="Waalwijk C."/>
            <person name="Ward T.J."/>
            <person name="Yao J."/>
            <person name="Birren B.W."/>
            <person name="Kistler H.C."/>
        </authorList>
    </citation>
    <scope>NUCLEOTIDE SEQUENCE [LARGE SCALE GENOMIC DNA]</scope>
    <source>
        <strain>ATCC MYA-4620 / CBS 123657 / FGSC 9075 / NRRL 31084 / PH-1</strain>
    </source>
</reference>
<reference key="2">
    <citation type="journal article" date="2010" name="Nature">
        <title>Comparative genomics reveals mobile pathogenicity chromosomes in Fusarium.</title>
        <authorList>
            <person name="Ma L.-J."/>
            <person name="van der Does H.C."/>
            <person name="Borkovich K.A."/>
            <person name="Coleman J.J."/>
            <person name="Daboussi M.-J."/>
            <person name="Di Pietro A."/>
            <person name="Dufresne M."/>
            <person name="Freitag M."/>
            <person name="Grabherr M."/>
            <person name="Henrissat B."/>
            <person name="Houterman P.M."/>
            <person name="Kang S."/>
            <person name="Shim W.-B."/>
            <person name="Woloshuk C."/>
            <person name="Xie X."/>
            <person name="Xu J.-R."/>
            <person name="Antoniw J."/>
            <person name="Baker S.E."/>
            <person name="Bluhm B.H."/>
            <person name="Breakspear A."/>
            <person name="Brown D.W."/>
            <person name="Butchko R.A.E."/>
            <person name="Chapman S."/>
            <person name="Coulson R."/>
            <person name="Coutinho P.M."/>
            <person name="Danchin E.G.J."/>
            <person name="Diener A."/>
            <person name="Gale L.R."/>
            <person name="Gardiner D.M."/>
            <person name="Goff S."/>
            <person name="Hammond-Kosack K.E."/>
            <person name="Hilburn K."/>
            <person name="Hua-Van A."/>
            <person name="Jonkers W."/>
            <person name="Kazan K."/>
            <person name="Kodira C.D."/>
            <person name="Koehrsen M."/>
            <person name="Kumar L."/>
            <person name="Lee Y.-H."/>
            <person name="Li L."/>
            <person name="Manners J.M."/>
            <person name="Miranda-Saavedra D."/>
            <person name="Mukherjee M."/>
            <person name="Park G."/>
            <person name="Park J."/>
            <person name="Park S.-Y."/>
            <person name="Proctor R.H."/>
            <person name="Regev A."/>
            <person name="Ruiz-Roldan M.C."/>
            <person name="Sain D."/>
            <person name="Sakthikumar S."/>
            <person name="Sykes S."/>
            <person name="Schwartz D.C."/>
            <person name="Turgeon B.G."/>
            <person name="Wapinski I."/>
            <person name="Yoder O."/>
            <person name="Young S."/>
            <person name="Zeng Q."/>
            <person name="Zhou S."/>
            <person name="Galagan J."/>
            <person name="Cuomo C.A."/>
            <person name="Kistler H.C."/>
            <person name="Rep M."/>
        </authorList>
    </citation>
    <scope>GENOME REANNOTATION</scope>
    <source>
        <strain>ATCC MYA-4620 / CBS 123657 / FGSC 9075 / NRRL 31084 / PH-1</strain>
    </source>
</reference>
<reference key="3">
    <citation type="journal article" date="2015" name="BMC Genomics">
        <title>The completed genome sequence of the pathogenic ascomycete fungus Fusarium graminearum.</title>
        <authorList>
            <person name="King R."/>
            <person name="Urban M."/>
            <person name="Hammond-Kosack M.C.U."/>
            <person name="Hassani-Pak K."/>
            <person name="Hammond-Kosack K.E."/>
        </authorList>
    </citation>
    <scope>NUCLEOTIDE SEQUENCE [LARGE SCALE GENOMIC DNA]</scope>
    <source>
        <strain>ATCC MYA-4620 / CBS 123657 / FGSC 9075 / NRRL 31084 / PH-1</strain>
    </source>
</reference>
<reference key="4">
    <citation type="journal article" date="2017" name="Sci. Rep.">
        <title>Genome-wide functional analysis reveals that autophagy is necessary for growth, sporulation, deoxynivalenol production and virulence in Fusarium graminearum.</title>
        <authorList>
            <person name="Lv W."/>
            <person name="Wang C."/>
            <person name="Yang N."/>
            <person name="Que Y."/>
            <person name="Talbot N.J."/>
            <person name="Wang Z."/>
        </authorList>
    </citation>
    <scope>IDENTIFICATION</scope>
    <scope>FUNCTION</scope>
    <scope>DISRUPTION PHENOTYPE</scope>
</reference>
<organism>
    <name type="scientific">Gibberella zeae (strain ATCC MYA-4620 / CBS 123657 / FGSC 9075 / NRRL 31084 / PH-1)</name>
    <name type="common">Wheat head blight fungus</name>
    <name type="synonym">Fusarium graminearum</name>
    <dbReference type="NCBI Taxonomy" id="229533"/>
    <lineage>
        <taxon>Eukaryota</taxon>
        <taxon>Fungi</taxon>
        <taxon>Dikarya</taxon>
        <taxon>Ascomycota</taxon>
        <taxon>Pezizomycotina</taxon>
        <taxon>Sordariomycetes</taxon>
        <taxon>Hypocreomycetidae</taxon>
        <taxon>Hypocreales</taxon>
        <taxon>Nectriaceae</taxon>
        <taxon>Fusarium</taxon>
    </lineage>
</organism>
<keyword id="KW-0029">Amino-acid transport</keyword>
<keyword id="KW-0072">Autophagy</keyword>
<keyword id="KW-0325">Glycoprotein</keyword>
<keyword id="KW-0472">Membrane</keyword>
<keyword id="KW-1185">Reference proteome</keyword>
<keyword id="KW-0812">Transmembrane</keyword>
<keyword id="KW-1133">Transmembrane helix</keyword>
<keyword id="KW-0813">Transport</keyword>
<keyword id="KW-0926">Vacuole</keyword>
<gene>
    <name evidence="6" type="primary">ATG22</name>
    <name type="ORF">FG012251</name>
    <name type="ORF">FGRAMPH1_01T03029</name>
</gene>
<proteinExistence type="inferred from homology"/>
<name>ATG22_GIBZE</name>